<keyword id="KW-0963">Cytoplasm</keyword>
<keyword id="KW-0479">Metal-binding</keyword>
<keyword id="KW-0819">tRNA processing</keyword>
<keyword id="KW-0862">Zinc</keyword>
<name>QTRT2_DROYA</name>
<reference key="1">
    <citation type="journal article" date="2007" name="Nature">
        <title>Evolution of genes and genomes on the Drosophila phylogeny.</title>
        <authorList>
            <consortium name="Drosophila 12 genomes consortium"/>
        </authorList>
    </citation>
    <scope>NUCLEOTIDE SEQUENCE [LARGE SCALE GENOMIC DNA]</scope>
    <source>
        <strain>Tai18E2 / Tucson 14021-0261.01</strain>
    </source>
</reference>
<feature type="chain" id="PRO_0000383943" description="Queuine tRNA-ribosyltransferase accessory subunit 2">
    <location>
        <begin position="1"/>
        <end position="418"/>
    </location>
</feature>
<feature type="binding site" evidence="1">
    <location>
        <position position="325"/>
    </location>
    <ligand>
        <name>Zn(2+)</name>
        <dbReference type="ChEBI" id="CHEBI:29105"/>
    </ligand>
</feature>
<feature type="binding site" evidence="1">
    <location>
        <position position="327"/>
    </location>
    <ligand>
        <name>Zn(2+)</name>
        <dbReference type="ChEBI" id="CHEBI:29105"/>
    </ligand>
</feature>
<feature type="binding site" evidence="1">
    <location>
        <position position="330"/>
    </location>
    <ligand>
        <name>Zn(2+)</name>
        <dbReference type="ChEBI" id="CHEBI:29105"/>
    </ligand>
</feature>
<feature type="binding site" evidence="1">
    <location>
        <position position="356"/>
    </location>
    <ligand>
        <name>Zn(2+)</name>
        <dbReference type="ChEBI" id="CHEBI:29105"/>
    </ligand>
</feature>
<sequence>MKFAIESISKNSGRLGQLRIKDGGPDFKTPLLLQTTKGGSIPWLSADVFESHVSQKPQVLQFTLSTMDHMTEALTHWNSGGGRGLSDYVGLPGHLNILMLRDPCETTPSGGNDRDILPLFTRRGKESLSSERYMEMVASFKPDFYEGLCDADTNLESAKKRIQKSVDRTEKFMHYIYEHRGKVNSTLLAPIVGGYNTFARTQSIKHAREQPAGSYGGYIFEGFHTNGLSATTLDTSKLLPIVEHCVKQLEEDKPRLMPGAYTPLTILELIRQGIDMFDSSYAYCASLNFKALTFSFVQDAVEHAPFLDITDEAIKEDFTPPLSNCSCLTCQKHTRAYLHHLYKTNELLGPILLIVHNLHHYMAFFEKIRESVARDELPRLTEFVRNQNGKTQVDYSIAANTKVISKAAMGKGFAAAAV</sequence>
<dbReference type="EMBL" id="CM000159">
    <property type="protein sequence ID" value="EDW93014.1"/>
    <property type="molecule type" value="Genomic_DNA"/>
</dbReference>
<dbReference type="SMR" id="B4PEV9"/>
<dbReference type="EnsemblMetazoa" id="FBtr0267755">
    <property type="protein sequence ID" value="FBpp0266247"/>
    <property type="gene ID" value="FBgn0238509"/>
</dbReference>
<dbReference type="EnsemblMetazoa" id="XM_002093266.4">
    <property type="protein sequence ID" value="XP_002093302.1"/>
    <property type="gene ID" value="LOC6532557"/>
</dbReference>
<dbReference type="GeneID" id="6532557"/>
<dbReference type="KEGG" id="dya:Dyak_GE21237"/>
<dbReference type="eggNOG" id="KOG3909">
    <property type="taxonomic scope" value="Eukaryota"/>
</dbReference>
<dbReference type="HOGENOM" id="CLU_037350_0_0_1"/>
<dbReference type="OMA" id="VPHIAHD"/>
<dbReference type="OrthoDB" id="27601at2759"/>
<dbReference type="PhylomeDB" id="B4PEV9"/>
<dbReference type="Proteomes" id="UP000002282">
    <property type="component" value="Chromosome 3L"/>
</dbReference>
<dbReference type="GO" id="GO:0005737">
    <property type="term" value="C:cytoplasm"/>
    <property type="evidence" value="ECO:0007669"/>
    <property type="project" value="UniProtKB-SubCell"/>
</dbReference>
<dbReference type="GO" id="GO:0046872">
    <property type="term" value="F:metal ion binding"/>
    <property type="evidence" value="ECO:0007669"/>
    <property type="project" value="UniProtKB-KW"/>
</dbReference>
<dbReference type="GO" id="GO:0008479">
    <property type="term" value="F:tRNA-guanosine(34) queuine transglycosylase activity"/>
    <property type="evidence" value="ECO:0007669"/>
    <property type="project" value="UniProtKB-UniRule"/>
</dbReference>
<dbReference type="GO" id="GO:0101030">
    <property type="term" value="P:tRNA-guanine transglycosylation"/>
    <property type="evidence" value="ECO:0007669"/>
    <property type="project" value="UniProtKB-UniRule"/>
</dbReference>
<dbReference type="FunFam" id="3.20.20.105:FF:000008">
    <property type="entry name" value="Queuine tRNA-ribosyltransferase accessory subunit 2"/>
    <property type="match status" value="1"/>
</dbReference>
<dbReference type="Gene3D" id="3.20.20.105">
    <property type="entry name" value="Queuine tRNA-ribosyltransferase-like"/>
    <property type="match status" value="1"/>
</dbReference>
<dbReference type="HAMAP" id="MF_03043">
    <property type="entry name" value="QTRT2"/>
    <property type="match status" value="1"/>
</dbReference>
<dbReference type="InterPro" id="IPR028592">
    <property type="entry name" value="QTRTD1"/>
</dbReference>
<dbReference type="InterPro" id="IPR050852">
    <property type="entry name" value="Queuine_tRNA-ribosyltrfase"/>
</dbReference>
<dbReference type="InterPro" id="IPR036511">
    <property type="entry name" value="TGT-like_sf"/>
</dbReference>
<dbReference type="InterPro" id="IPR002616">
    <property type="entry name" value="tRNA_ribo_trans-like"/>
</dbReference>
<dbReference type="NCBIfam" id="TIGR00449">
    <property type="entry name" value="tgt_general"/>
    <property type="match status" value="1"/>
</dbReference>
<dbReference type="PANTHER" id="PTHR46064">
    <property type="entry name" value="QUEUINE TRNA-RIBOSYLTRANSFERASE ACCESSORY SUBUNIT 2"/>
    <property type="match status" value="1"/>
</dbReference>
<dbReference type="PANTHER" id="PTHR46064:SF1">
    <property type="entry name" value="QUEUINE TRNA-RIBOSYLTRANSFERASE ACCESSORY SUBUNIT 2"/>
    <property type="match status" value="1"/>
</dbReference>
<dbReference type="Pfam" id="PF01702">
    <property type="entry name" value="TGT"/>
    <property type="match status" value="1"/>
</dbReference>
<dbReference type="SUPFAM" id="SSF51713">
    <property type="entry name" value="tRNA-guanine transglycosylase"/>
    <property type="match status" value="1"/>
</dbReference>
<comment type="function">
    <text evidence="1">Non-catalytic subunit of the queuine tRNA-ribosyltransferase (TGT) that catalyzes the base-exchange of a guanine (G) residue with queuine (Q) at position 34 (anticodon wobble position) in tRNAs with GU(N) anticodons (tRNA-Asp, -Asn, -His and -Tyr), resulting in the hypermodified nucleoside queuosine (7-(((4,5-cis-dihydroxy-2-cyclopenten-1-yl)amino)methyl)-7-deazaguanosine).</text>
</comment>
<comment type="cofactor">
    <cofactor evidence="1">
        <name>Zn(2+)</name>
        <dbReference type="ChEBI" id="CHEBI:29105"/>
    </cofactor>
    <text evidence="1">Binds 1 zinc ion per subunit.</text>
</comment>
<comment type="subunit">
    <text evidence="1">Heterodimer of a catalytic subunit and an accessory subunit.</text>
</comment>
<comment type="subcellular location">
    <subcellularLocation>
        <location evidence="1">Cytoplasm</location>
    </subcellularLocation>
</comment>
<comment type="similarity">
    <text evidence="1">Belongs to the queuine tRNA-ribosyltransferase family. QTRT2 subfamily.</text>
</comment>
<evidence type="ECO:0000255" key="1">
    <source>
        <dbReference type="HAMAP-Rule" id="MF_03043"/>
    </source>
</evidence>
<organism>
    <name type="scientific">Drosophila yakuba</name>
    <name type="common">Fruit fly</name>
    <dbReference type="NCBI Taxonomy" id="7245"/>
    <lineage>
        <taxon>Eukaryota</taxon>
        <taxon>Metazoa</taxon>
        <taxon>Ecdysozoa</taxon>
        <taxon>Arthropoda</taxon>
        <taxon>Hexapoda</taxon>
        <taxon>Insecta</taxon>
        <taxon>Pterygota</taxon>
        <taxon>Neoptera</taxon>
        <taxon>Endopterygota</taxon>
        <taxon>Diptera</taxon>
        <taxon>Brachycera</taxon>
        <taxon>Muscomorpha</taxon>
        <taxon>Ephydroidea</taxon>
        <taxon>Drosophilidae</taxon>
        <taxon>Drosophila</taxon>
        <taxon>Sophophora</taxon>
    </lineage>
</organism>
<protein>
    <recommendedName>
        <fullName evidence="1">Queuine tRNA-ribosyltransferase accessory subunit 2</fullName>
    </recommendedName>
    <alternativeName>
        <fullName evidence="1">Queuine tRNA-ribosyltransferase domain-containing protein 1</fullName>
    </alternativeName>
</protein>
<gene>
    <name type="ORF">GE21237</name>
</gene>
<accession>B4PEV9</accession>
<proteinExistence type="inferred from homology"/>